<proteinExistence type="inferred from homology"/>
<gene>
    <name evidence="1" type="primary">uvrB</name>
    <name type="ordered locus">XfasM23_1833</name>
</gene>
<evidence type="ECO:0000255" key="1">
    <source>
        <dbReference type="HAMAP-Rule" id="MF_00204"/>
    </source>
</evidence>
<dbReference type="EMBL" id="CP001011">
    <property type="protein sequence ID" value="ACB93235.1"/>
    <property type="molecule type" value="Genomic_DNA"/>
</dbReference>
<dbReference type="RefSeq" id="WP_004089700.1">
    <property type="nucleotide sequence ID" value="NC_010577.1"/>
</dbReference>
<dbReference type="SMR" id="B2I8F9"/>
<dbReference type="GeneID" id="93905579"/>
<dbReference type="KEGG" id="xfn:XfasM23_1833"/>
<dbReference type="HOGENOM" id="CLU_009621_2_1_6"/>
<dbReference type="Proteomes" id="UP000001698">
    <property type="component" value="Chromosome"/>
</dbReference>
<dbReference type="GO" id="GO:0005737">
    <property type="term" value="C:cytoplasm"/>
    <property type="evidence" value="ECO:0007669"/>
    <property type="project" value="UniProtKB-SubCell"/>
</dbReference>
<dbReference type="GO" id="GO:0009380">
    <property type="term" value="C:excinuclease repair complex"/>
    <property type="evidence" value="ECO:0007669"/>
    <property type="project" value="InterPro"/>
</dbReference>
<dbReference type="GO" id="GO:0005524">
    <property type="term" value="F:ATP binding"/>
    <property type="evidence" value="ECO:0007669"/>
    <property type="project" value="UniProtKB-UniRule"/>
</dbReference>
<dbReference type="GO" id="GO:0016887">
    <property type="term" value="F:ATP hydrolysis activity"/>
    <property type="evidence" value="ECO:0007669"/>
    <property type="project" value="InterPro"/>
</dbReference>
<dbReference type="GO" id="GO:0003677">
    <property type="term" value="F:DNA binding"/>
    <property type="evidence" value="ECO:0007669"/>
    <property type="project" value="UniProtKB-UniRule"/>
</dbReference>
<dbReference type="GO" id="GO:0009381">
    <property type="term" value="F:excinuclease ABC activity"/>
    <property type="evidence" value="ECO:0007669"/>
    <property type="project" value="UniProtKB-UniRule"/>
</dbReference>
<dbReference type="GO" id="GO:0004386">
    <property type="term" value="F:helicase activity"/>
    <property type="evidence" value="ECO:0007669"/>
    <property type="project" value="UniProtKB-KW"/>
</dbReference>
<dbReference type="GO" id="GO:0006289">
    <property type="term" value="P:nucleotide-excision repair"/>
    <property type="evidence" value="ECO:0007669"/>
    <property type="project" value="UniProtKB-UniRule"/>
</dbReference>
<dbReference type="GO" id="GO:0009432">
    <property type="term" value="P:SOS response"/>
    <property type="evidence" value="ECO:0007669"/>
    <property type="project" value="UniProtKB-UniRule"/>
</dbReference>
<dbReference type="CDD" id="cd17916">
    <property type="entry name" value="DEXHc_UvrB"/>
    <property type="match status" value="1"/>
</dbReference>
<dbReference type="CDD" id="cd18790">
    <property type="entry name" value="SF2_C_UvrB"/>
    <property type="match status" value="1"/>
</dbReference>
<dbReference type="FunFam" id="3.40.50.300:FF:000477">
    <property type="entry name" value="UvrABC system protein B"/>
    <property type="match status" value="1"/>
</dbReference>
<dbReference type="Gene3D" id="3.40.50.300">
    <property type="entry name" value="P-loop containing nucleotide triphosphate hydrolases"/>
    <property type="match status" value="3"/>
</dbReference>
<dbReference type="Gene3D" id="4.10.860.10">
    <property type="entry name" value="UVR domain"/>
    <property type="match status" value="1"/>
</dbReference>
<dbReference type="HAMAP" id="MF_00204">
    <property type="entry name" value="UvrB"/>
    <property type="match status" value="1"/>
</dbReference>
<dbReference type="InterPro" id="IPR006935">
    <property type="entry name" value="Helicase/UvrB_N"/>
</dbReference>
<dbReference type="InterPro" id="IPR014001">
    <property type="entry name" value="Helicase_ATP-bd"/>
</dbReference>
<dbReference type="InterPro" id="IPR001650">
    <property type="entry name" value="Helicase_C-like"/>
</dbReference>
<dbReference type="InterPro" id="IPR027417">
    <property type="entry name" value="P-loop_NTPase"/>
</dbReference>
<dbReference type="InterPro" id="IPR001943">
    <property type="entry name" value="UVR_dom"/>
</dbReference>
<dbReference type="InterPro" id="IPR036876">
    <property type="entry name" value="UVR_dom_sf"/>
</dbReference>
<dbReference type="InterPro" id="IPR004807">
    <property type="entry name" value="UvrB"/>
</dbReference>
<dbReference type="InterPro" id="IPR041471">
    <property type="entry name" value="UvrB_inter"/>
</dbReference>
<dbReference type="InterPro" id="IPR024759">
    <property type="entry name" value="UvrB_YAD/RRR_dom"/>
</dbReference>
<dbReference type="NCBIfam" id="NF003673">
    <property type="entry name" value="PRK05298.1"/>
    <property type="match status" value="1"/>
</dbReference>
<dbReference type="NCBIfam" id="TIGR00631">
    <property type="entry name" value="uvrb"/>
    <property type="match status" value="1"/>
</dbReference>
<dbReference type="PANTHER" id="PTHR24029">
    <property type="entry name" value="UVRABC SYSTEM PROTEIN B"/>
    <property type="match status" value="1"/>
</dbReference>
<dbReference type="PANTHER" id="PTHR24029:SF0">
    <property type="entry name" value="UVRABC SYSTEM PROTEIN B"/>
    <property type="match status" value="1"/>
</dbReference>
<dbReference type="Pfam" id="PF00271">
    <property type="entry name" value="Helicase_C"/>
    <property type="match status" value="1"/>
</dbReference>
<dbReference type="Pfam" id="PF04851">
    <property type="entry name" value="ResIII"/>
    <property type="match status" value="1"/>
</dbReference>
<dbReference type="Pfam" id="PF02151">
    <property type="entry name" value="UVR"/>
    <property type="match status" value="1"/>
</dbReference>
<dbReference type="Pfam" id="PF12344">
    <property type="entry name" value="UvrB"/>
    <property type="match status" value="1"/>
</dbReference>
<dbReference type="Pfam" id="PF17757">
    <property type="entry name" value="UvrB_inter"/>
    <property type="match status" value="1"/>
</dbReference>
<dbReference type="SMART" id="SM00487">
    <property type="entry name" value="DEXDc"/>
    <property type="match status" value="1"/>
</dbReference>
<dbReference type="SMART" id="SM00490">
    <property type="entry name" value="HELICc"/>
    <property type="match status" value="1"/>
</dbReference>
<dbReference type="SUPFAM" id="SSF46600">
    <property type="entry name" value="C-terminal UvrC-binding domain of UvrB"/>
    <property type="match status" value="1"/>
</dbReference>
<dbReference type="SUPFAM" id="SSF52540">
    <property type="entry name" value="P-loop containing nucleoside triphosphate hydrolases"/>
    <property type="match status" value="2"/>
</dbReference>
<dbReference type="PROSITE" id="PS51192">
    <property type="entry name" value="HELICASE_ATP_BIND_1"/>
    <property type="match status" value="1"/>
</dbReference>
<dbReference type="PROSITE" id="PS51194">
    <property type="entry name" value="HELICASE_CTER"/>
    <property type="match status" value="1"/>
</dbReference>
<dbReference type="PROSITE" id="PS50151">
    <property type="entry name" value="UVR"/>
    <property type="match status" value="1"/>
</dbReference>
<protein>
    <recommendedName>
        <fullName evidence="1">UvrABC system protein B</fullName>
        <shortName evidence="1">Protein UvrB</shortName>
    </recommendedName>
    <alternativeName>
        <fullName evidence="1">Excinuclease ABC subunit B</fullName>
    </alternativeName>
</protein>
<reference key="1">
    <citation type="journal article" date="2010" name="J. Bacteriol.">
        <title>Whole genome sequences of two Xylella fastidiosa strains (M12 and M23) causing almond leaf scorch disease in California.</title>
        <authorList>
            <person name="Chen J."/>
            <person name="Xie G."/>
            <person name="Han S."/>
            <person name="Chertkov O."/>
            <person name="Sims D."/>
            <person name="Civerolo E.L."/>
        </authorList>
    </citation>
    <scope>NUCLEOTIDE SEQUENCE [LARGE SCALE GENOMIC DNA]</scope>
    <source>
        <strain>M23</strain>
    </source>
</reference>
<sequence length="669" mass="75438">MTGLFQLVSSYSPSGDQPAAVQKLVTNFHAGIAKQVLLGVTGSGKTYTIANVVEQIQKPTLVMAPNKTLAAQLYGEFKAFFPHNAVEYFVSYYDYYQPEAYVPASDTFIEKDSSINEYIEQMRLAATKALLSRSDVLVVATVSAIYGLGAPEDYLSLRLILSLGEHIEQRQLIRHLTELQYTRNELDLVRGSFRVRGEVVDVFPAESEMEALRIELFDGEIESLSLFDPLTGQTVRKLQRFSVYPKTHYATTRERTLSAVDTIKDELKEYLELLYGRNKLVEAQRLAQRTQFDLEMMAEVGYCNGIENYSRHLTGKAPGEPPPTLFDYLPPDALLVIDESHVTIPQIGAMFKGDRSRKETLVEFGFRLPSALDNRPLRFEEWEVRSPRSIYVSATPGSYEFRESAGEVIELLVRPTGLIDPEIEIRPVATQVDDLISQINACIKLGDRVLVTTLTKRMAENLTEYLSEQGIRIRYLHSEIDTVERVEIIRDLRLGKFDVLVGINLLREGLDMPEVSLVAILDADKEGFLRSTSSLIQTIGRAARSVRGRAILYADKVTRSMRAAIDETERRRQKQKEYNAENGIVPKSVVRPISDILEGARDGVEVKSKGKGRRVDEVPADYGALNQAEIAAQMKVLEQKMYQHARDLEFEDAARIRDQIQRLREAGLG</sequence>
<comment type="function">
    <text evidence="1">The UvrABC repair system catalyzes the recognition and processing of DNA lesions. A damage recognition complex composed of 2 UvrA and 2 UvrB subunits scans DNA for abnormalities. Upon binding of the UvrA(2)B(2) complex to a putative damaged site, the DNA wraps around one UvrB monomer. DNA wrap is dependent on ATP binding by UvrB and probably causes local melting of the DNA helix, facilitating insertion of UvrB beta-hairpin between the DNA strands. Then UvrB probes one DNA strand for the presence of a lesion. If a lesion is found the UvrA subunits dissociate and the UvrB-DNA preincision complex is formed. This complex is subsequently bound by UvrC and the second UvrB is released. If no lesion is found, the DNA wraps around the other UvrB subunit that will check the other stand for damage.</text>
</comment>
<comment type="subunit">
    <text evidence="1">Forms a heterotetramer with UvrA during the search for lesions. Interacts with UvrC in an incision complex.</text>
</comment>
<comment type="subcellular location">
    <subcellularLocation>
        <location evidence="1">Cytoplasm</location>
    </subcellularLocation>
</comment>
<comment type="domain">
    <text evidence="1">The beta-hairpin motif is involved in DNA binding.</text>
</comment>
<comment type="similarity">
    <text evidence="1">Belongs to the UvrB family.</text>
</comment>
<keyword id="KW-0067">ATP-binding</keyword>
<keyword id="KW-0963">Cytoplasm</keyword>
<keyword id="KW-0227">DNA damage</keyword>
<keyword id="KW-0228">DNA excision</keyword>
<keyword id="KW-0234">DNA repair</keyword>
<keyword id="KW-0267">Excision nuclease</keyword>
<keyword id="KW-0347">Helicase</keyword>
<keyword id="KW-0378">Hydrolase</keyword>
<keyword id="KW-0547">Nucleotide-binding</keyword>
<keyword id="KW-0742">SOS response</keyword>
<organism>
    <name type="scientific">Xylella fastidiosa (strain M23)</name>
    <dbReference type="NCBI Taxonomy" id="405441"/>
    <lineage>
        <taxon>Bacteria</taxon>
        <taxon>Pseudomonadati</taxon>
        <taxon>Pseudomonadota</taxon>
        <taxon>Gammaproteobacteria</taxon>
        <taxon>Lysobacterales</taxon>
        <taxon>Lysobacteraceae</taxon>
        <taxon>Xylella</taxon>
    </lineage>
</organism>
<feature type="chain" id="PRO_1000099579" description="UvrABC system protein B">
    <location>
        <begin position="1"/>
        <end position="669"/>
    </location>
</feature>
<feature type="domain" description="Helicase ATP-binding" evidence="1">
    <location>
        <begin position="26"/>
        <end position="183"/>
    </location>
</feature>
<feature type="domain" description="Helicase C-terminal" evidence="1">
    <location>
        <begin position="431"/>
        <end position="597"/>
    </location>
</feature>
<feature type="domain" description="UVR" evidence="1">
    <location>
        <begin position="631"/>
        <end position="666"/>
    </location>
</feature>
<feature type="short sequence motif" description="Beta-hairpin">
    <location>
        <begin position="92"/>
        <end position="115"/>
    </location>
</feature>
<feature type="binding site" evidence="1">
    <location>
        <begin position="39"/>
        <end position="46"/>
    </location>
    <ligand>
        <name>ATP</name>
        <dbReference type="ChEBI" id="CHEBI:30616"/>
    </ligand>
</feature>
<accession>B2I8F9</accession>
<name>UVRB_XYLF2</name>